<dbReference type="EC" id="1.2.1.38" evidence="1"/>
<dbReference type="EMBL" id="CP001389">
    <property type="protein sequence ID" value="ACP24808.1"/>
    <property type="molecule type" value="Genomic_DNA"/>
</dbReference>
<dbReference type="RefSeq" id="WP_012707592.1">
    <property type="nucleotide sequence ID" value="NC_012587.1"/>
</dbReference>
<dbReference type="RefSeq" id="YP_002825561.1">
    <property type="nucleotide sequence ID" value="NC_012587.1"/>
</dbReference>
<dbReference type="SMR" id="C3MA29"/>
<dbReference type="STRING" id="394.NGR_c10190"/>
<dbReference type="KEGG" id="rhi:NGR_c10190"/>
<dbReference type="PATRIC" id="fig|394.7.peg.3840"/>
<dbReference type="eggNOG" id="COG0002">
    <property type="taxonomic scope" value="Bacteria"/>
</dbReference>
<dbReference type="HOGENOM" id="CLU_077118_0_0_5"/>
<dbReference type="OrthoDB" id="9801289at2"/>
<dbReference type="UniPathway" id="UPA00068">
    <property type="reaction ID" value="UER00108"/>
</dbReference>
<dbReference type="Proteomes" id="UP000001054">
    <property type="component" value="Chromosome"/>
</dbReference>
<dbReference type="GO" id="GO:0005737">
    <property type="term" value="C:cytoplasm"/>
    <property type="evidence" value="ECO:0007669"/>
    <property type="project" value="UniProtKB-SubCell"/>
</dbReference>
<dbReference type="GO" id="GO:0003942">
    <property type="term" value="F:N-acetyl-gamma-glutamyl-phosphate reductase activity"/>
    <property type="evidence" value="ECO:0007669"/>
    <property type="project" value="UniProtKB-UniRule"/>
</dbReference>
<dbReference type="GO" id="GO:0051287">
    <property type="term" value="F:NAD binding"/>
    <property type="evidence" value="ECO:0007669"/>
    <property type="project" value="InterPro"/>
</dbReference>
<dbReference type="GO" id="GO:0006526">
    <property type="term" value="P:L-arginine biosynthetic process"/>
    <property type="evidence" value="ECO:0007669"/>
    <property type="project" value="UniProtKB-UniRule"/>
</dbReference>
<dbReference type="CDD" id="cd23935">
    <property type="entry name" value="AGPR_2_C"/>
    <property type="match status" value="1"/>
</dbReference>
<dbReference type="CDD" id="cd17896">
    <property type="entry name" value="AGPR_2_N"/>
    <property type="match status" value="1"/>
</dbReference>
<dbReference type="Gene3D" id="3.30.360.10">
    <property type="entry name" value="Dihydrodipicolinate Reductase, domain 2"/>
    <property type="match status" value="1"/>
</dbReference>
<dbReference type="Gene3D" id="3.40.50.720">
    <property type="entry name" value="NAD(P)-binding Rossmann-like Domain"/>
    <property type="match status" value="1"/>
</dbReference>
<dbReference type="HAMAP" id="MF_01110">
    <property type="entry name" value="ArgC_type2"/>
    <property type="match status" value="1"/>
</dbReference>
<dbReference type="InterPro" id="IPR010136">
    <property type="entry name" value="AGPR_type-2"/>
</dbReference>
<dbReference type="InterPro" id="IPR036291">
    <property type="entry name" value="NAD(P)-bd_dom_sf"/>
</dbReference>
<dbReference type="InterPro" id="IPR050085">
    <property type="entry name" value="NAGSA_dehydrogenase"/>
</dbReference>
<dbReference type="InterPro" id="IPR000534">
    <property type="entry name" value="Semialdehyde_DH_NAD-bd"/>
</dbReference>
<dbReference type="NCBIfam" id="TIGR01851">
    <property type="entry name" value="argC_other"/>
    <property type="match status" value="1"/>
</dbReference>
<dbReference type="PANTHER" id="PTHR32338:SF10">
    <property type="entry name" value="N-ACETYL-GAMMA-GLUTAMYL-PHOSPHATE REDUCTASE, CHLOROPLASTIC-RELATED"/>
    <property type="match status" value="1"/>
</dbReference>
<dbReference type="PANTHER" id="PTHR32338">
    <property type="entry name" value="N-ACETYL-GAMMA-GLUTAMYL-PHOSPHATE REDUCTASE, CHLOROPLASTIC-RELATED-RELATED"/>
    <property type="match status" value="1"/>
</dbReference>
<dbReference type="Pfam" id="PF01118">
    <property type="entry name" value="Semialdhyde_dh"/>
    <property type="match status" value="1"/>
</dbReference>
<dbReference type="Pfam" id="PF22698">
    <property type="entry name" value="Semialdhyde_dhC_1"/>
    <property type="match status" value="1"/>
</dbReference>
<dbReference type="SMART" id="SM00859">
    <property type="entry name" value="Semialdhyde_dh"/>
    <property type="match status" value="1"/>
</dbReference>
<dbReference type="SUPFAM" id="SSF55347">
    <property type="entry name" value="Glyceraldehyde-3-phosphate dehydrogenase-like, C-terminal domain"/>
    <property type="match status" value="1"/>
</dbReference>
<dbReference type="SUPFAM" id="SSF51735">
    <property type="entry name" value="NAD(P)-binding Rossmann-fold domains"/>
    <property type="match status" value="1"/>
</dbReference>
<keyword id="KW-0028">Amino-acid biosynthesis</keyword>
<keyword id="KW-0055">Arginine biosynthesis</keyword>
<keyword id="KW-0963">Cytoplasm</keyword>
<keyword id="KW-0521">NADP</keyword>
<keyword id="KW-0560">Oxidoreductase</keyword>
<keyword id="KW-1185">Reference proteome</keyword>
<evidence type="ECO:0000255" key="1">
    <source>
        <dbReference type="HAMAP-Rule" id="MF_01110"/>
    </source>
</evidence>
<sequence>MKPKIFIDGEHGTTGLQIRARMAGRSDLELLSIPEAERRNAALREDLLNGADIAILCLPDDASREAVAMVAGNNRVRIIDTSTAHRVAPDWAYGFAEMDKAQPAKIRDARHVSNPGCYPTGAIGVIRPLRQAGILPDGYPVTVNAVSGYTGGGKQMIAQIEDENHADHISAPHFLYGLPLKHKHVPEMKMHGMLERAPIFSPSVGKFPQGMIVQVPLYLDDLAPGATLESIHAALVEHYAGQSIVEVVPLSAQLARIDATELAGKDTMKLFVFGTPGGAHVNLVALLDNLGKGASGAAVQNMDLMLSA</sequence>
<reference key="1">
    <citation type="journal article" date="2009" name="Appl. Environ. Microbiol.">
        <title>Rhizobium sp. strain NGR234 possesses a remarkable number of secretion systems.</title>
        <authorList>
            <person name="Schmeisser C."/>
            <person name="Liesegang H."/>
            <person name="Krysciak D."/>
            <person name="Bakkou N."/>
            <person name="Le Quere A."/>
            <person name="Wollherr A."/>
            <person name="Heinemeyer I."/>
            <person name="Morgenstern B."/>
            <person name="Pommerening-Roeser A."/>
            <person name="Flores M."/>
            <person name="Palacios R."/>
            <person name="Brenner S."/>
            <person name="Gottschalk G."/>
            <person name="Schmitz R.A."/>
            <person name="Broughton W.J."/>
            <person name="Perret X."/>
            <person name="Strittmatter A.W."/>
            <person name="Streit W.R."/>
        </authorList>
    </citation>
    <scope>NUCLEOTIDE SEQUENCE [LARGE SCALE GENOMIC DNA]</scope>
    <source>
        <strain>NBRC 101917 / NGR234</strain>
    </source>
</reference>
<comment type="function">
    <text evidence="1">Catalyzes the NADPH-dependent reduction of N-acetyl-5-glutamyl phosphate to yield N-acetyl-L-glutamate 5-semialdehyde.</text>
</comment>
<comment type="catalytic activity">
    <reaction evidence="1">
        <text>N-acetyl-L-glutamate 5-semialdehyde + phosphate + NADP(+) = N-acetyl-L-glutamyl 5-phosphate + NADPH + H(+)</text>
        <dbReference type="Rhea" id="RHEA:21588"/>
        <dbReference type="ChEBI" id="CHEBI:15378"/>
        <dbReference type="ChEBI" id="CHEBI:29123"/>
        <dbReference type="ChEBI" id="CHEBI:43474"/>
        <dbReference type="ChEBI" id="CHEBI:57783"/>
        <dbReference type="ChEBI" id="CHEBI:57936"/>
        <dbReference type="ChEBI" id="CHEBI:58349"/>
        <dbReference type="EC" id="1.2.1.38"/>
    </reaction>
</comment>
<comment type="pathway">
    <text evidence="1">Amino-acid biosynthesis; L-arginine biosynthesis; N(2)-acetyl-L-ornithine from L-glutamate: step 3/4.</text>
</comment>
<comment type="subcellular location">
    <subcellularLocation>
        <location evidence="1">Cytoplasm</location>
    </subcellularLocation>
</comment>
<comment type="similarity">
    <text evidence="1">Belongs to the NAGSA dehydrogenase family. Type 2 subfamily.</text>
</comment>
<accession>C3MA29</accession>
<protein>
    <recommendedName>
        <fullName evidence="1">N-acetyl-gamma-glutamyl-phosphate reductase</fullName>
        <shortName evidence="1">AGPR</shortName>
        <ecNumber evidence="1">1.2.1.38</ecNumber>
    </recommendedName>
    <alternativeName>
        <fullName evidence="1">N-acetyl-glutamate semialdehyde dehydrogenase</fullName>
        <shortName evidence="1">NAGSA dehydrogenase</shortName>
    </alternativeName>
</protein>
<organism>
    <name type="scientific">Sinorhizobium fredii (strain NBRC 101917 / NGR234)</name>
    <dbReference type="NCBI Taxonomy" id="394"/>
    <lineage>
        <taxon>Bacteria</taxon>
        <taxon>Pseudomonadati</taxon>
        <taxon>Pseudomonadota</taxon>
        <taxon>Alphaproteobacteria</taxon>
        <taxon>Hyphomicrobiales</taxon>
        <taxon>Rhizobiaceae</taxon>
        <taxon>Sinorhizobium/Ensifer group</taxon>
        <taxon>Sinorhizobium</taxon>
    </lineage>
</organism>
<gene>
    <name evidence="1" type="primary">argC</name>
    <name type="ordered locus">NGR_c10190</name>
</gene>
<name>ARGC_SINFN</name>
<feature type="chain" id="PRO_1000163995" description="N-acetyl-gamma-glutamyl-phosphate reductase">
    <location>
        <begin position="1"/>
        <end position="308"/>
    </location>
</feature>
<feature type="active site" evidence="1">
    <location>
        <position position="117"/>
    </location>
</feature>
<proteinExistence type="inferred from homology"/>